<organism>
    <name type="scientific">Drosophila yakuba</name>
    <name type="common">Fruit fly</name>
    <dbReference type="NCBI Taxonomy" id="7245"/>
    <lineage>
        <taxon>Eukaryota</taxon>
        <taxon>Metazoa</taxon>
        <taxon>Ecdysozoa</taxon>
        <taxon>Arthropoda</taxon>
        <taxon>Hexapoda</taxon>
        <taxon>Insecta</taxon>
        <taxon>Pterygota</taxon>
        <taxon>Neoptera</taxon>
        <taxon>Endopterygota</taxon>
        <taxon>Diptera</taxon>
        <taxon>Brachycera</taxon>
        <taxon>Muscomorpha</taxon>
        <taxon>Ephydroidea</taxon>
        <taxon>Drosophilidae</taxon>
        <taxon>Drosophila</taxon>
        <taxon>Sophophora</taxon>
    </lineage>
</organism>
<protein>
    <recommendedName>
        <fullName evidence="2">Neuropathy target esterase sws</fullName>
    </recommendedName>
    <alternativeName>
        <fullName evidence="2">Swiss cheese</fullName>
        <ecNumber>3.1.1.5</ecNumber>
    </alternativeName>
</protein>
<feature type="chain" id="PRO_0000389229" description="Neuropathy target esterase sws">
    <location>
        <begin position="1"/>
        <end position="1467"/>
    </location>
</feature>
<feature type="topological domain" description="Lumenal" evidence="3">
    <location>
        <begin position="1"/>
        <end position="34"/>
    </location>
</feature>
<feature type="transmembrane region" description="Helical" evidence="3">
    <location>
        <begin position="35"/>
        <end position="55"/>
    </location>
</feature>
<feature type="topological domain" description="Cytoplasmic" evidence="3">
    <location>
        <begin position="56"/>
        <end position="1467"/>
    </location>
</feature>
<feature type="domain" description="PNPLA" evidence="4">
    <location>
        <begin position="958"/>
        <end position="1124"/>
    </location>
</feature>
<feature type="region of interest" description="Disordered" evidence="5">
    <location>
        <begin position="332"/>
        <end position="353"/>
    </location>
</feature>
<feature type="region of interest" description="Disordered" evidence="5">
    <location>
        <begin position="372"/>
        <end position="416"/>
    </location>
</feature>
<feature type="region of interest" description="Disordered" evidence="5">
    <location>
        <begin position="1377"/>
        <end position="1467"/>
    </location>
</feature>
<feature type="short sequence motif" description="GXGXXG" evidence="4">
    <location>
        <begin position="962"/>
        <end position="967"/>
    </location>
</feature>
<feature type="short sequence motif" description="GXSXG" evidence="4">
    <location>
        <begin position="989"/>
        <end position="993"/>
    </location>
</feature>
<feature type="short sequence motif" description="DGA/G" evidence="4">
    <location>
        <begin position="1111"/>
        <end position="1113"/>
    </location>
</feature>
<feature type="compositionally biased region" description="Low complexity" evidence="5">
    <location>
        <begin position="339"/>
        <end position="350"/>
    </location>
</feature>
<feature type="compositionally biased region" description="Polar residues" evidence="5">
    <location>
        <begin position="1382"/>
        <end position="1393"/>
    </location>
</feature>
<feature type="compositionally biased region" description="Basic and acidic residues" evidence="5">
    <location>
        <begin position="1396"/>
        <end position="1406"/>
    </location>
</feature>
<feature type="compositionally biased region" description="Basic and acidic residues" evidence="5">
    <location>
        <begin position="1448"/>
        <end position="1458"/>
    </location>
</feature>
<feature type="active site" description="Nucleophile" evidence="4">
    <location>
        <position position="991"/>
    </location>
</feature>
<feature type="active site" description="Proton acceptor" evidence="4">
    <location>
        <position position="1111"/>
    </location>
</feature>
<feature type="binding site" evidence="3">
    <location>
        <begin position="174"/>
        <end position="301"/>
    </location>
    <ligand>
        <name>a nucleoside 3',5'-cyclic phosphate</name>
        <dbReference type="ChEBI" id="CHEBI:58464"/>
        <label>1</label>
    </ligand>
</feature>
<feature type="binding site" evidence="3">
    <location>
        <begin position="488"/>
        <end position="615"/>
    </location>
    <ligand>
        <name>a nucleoside 3',5'-cyclic phosphate</name>
        <dbReference type="ChEBI" id="CHEBI:58464"/>
        <label>2</label>
    </ligand>
</feature>
<feature type="binding site" evidence="3">
    <location>
        <begin position="604"/>
        <end position="731"/>
    </location>
    <ligand>
        <name>a nucleoside 3',5'-cyclic phosphate</name>
        <dbReference type="ChEBI" id="CHEBI:58464"/>
        <label>3</label>
    </ligand>
</feature>
<feature type="modified residue" description="Phosphoserine" evidence="2">
    <location>
        <position position="450"/>
    </location>
</feature>
<feature type="modified residue" description="Phosphoserine" evidence="2">
    <location>
        <position position="459"/>
    </location>
</feature>
<feature type="modified residue" description="Phosphoserine" evidence="2">
    <location>
        <position position="1205"/>
    </location>
</feature>
<name>SWS_DROYA</name>
<comment type="function">
    <text evidence="2">Phospholipase B that deacylates intracellular phosphatidylcholine (PtdCho), generating glycerophosphocholine (GroPtdCho). This deacylation occurs at both sn-2 and sn-1 positions of PtdCho. Its specific chemical modification by certain organophosphorus (OP) compounds leads to distal axonopathy. Plays a role in the signaling mechanism between neurons and glia that regulates glia wrapping during development of the adult brain. Essential for membrane lipid homeostasis and cell survival in both neurons and glia of the adult brain (By similarity).</text>
</comment>
<comment type="catalytic activity">
    <reaction evidence="2">
        <text>a 1-acyl-sn-glycero-3-phosphocholine + H2O = sn-glycerol 3-phosphocholine + a fatty acid + H(+)</text>
        <dbReference type="Rhea" id="RHEA:15177"/>
        <dbReference type="ChEBI" id="CHEBI:15377"/>
        <dbReference type="ChEBI" id="CHEBI:15378"/>
        <dbReference type="ChEBI" id="CHEBI:16870"/>
        <dbReference type="ChEBI" id="CHEBI:28868"/>
        <dbReference type="ChEBI" id="CHEBI:58168"/>
        <dbReference type="EC" id="3.1.1.5"/>
    </reaction>
</comment>
<comment type="subunit">
    <text evidence="1">Interacts with Pka-C3; interaction inhibits the catalytic function of Pka-C3 and the esterase activity of sws.</text>
</comment>
<comment type="subcellular location">
    <subcellularLocation>
        <location evidence="2">Endoplasmic reticulum membrane</location>
        <topology evidence="2">Single-pass type I membrane protein</topology>
    </subcellularLocation>
    <text evidence="2">Sws tethers Pka-C3 to the membrane.</text>
</comment>
<comment type="similarity">
    <text evidence="3">Belongs to the NTE family.</text>
</comment>
<dbReference type="EC" id="3.1.1.5"/>
<dbReference type="EMBL" id="CM000162">
    <property type="protein sequence ID" value="EDX02314.1"/>
    <property type="molecule type" value="Genomic_DNA"/>
</dbReference>
<dbReference type="SMR" id="B4Q0P3"/>
<dbReference type="EnsemblMetazoa" id="XM_039374447.1">
    <property type="protein sequence ID" value="XP_039230381.1"/>
    <property type="gene ID" value="LOC6525370"/>
</dbReference>
<dbReference type="GeneID" id="6525370"/>
<dbReference type="KEGG" id="dya:Dyak_GE17492"/>
<dbReference type="CTD" id="31716"/>
<dbReference type="eggNOG" id="KOG2968">
    <property type="taxonomic scope" value="Eukaryota"/>
</dbReference>
<dbReference type="HOGENOM" id="CLU_000960_1_0_1"/>
<dbReference type="OMA" id="GQQEDRH"/>
<dbReference type="OrthoDB" id="421051at2759"/>
<dbReference type="PhylomeDB" id="B4Q0P3"/>
<dbReference type="Proteomes" id="UP000002282">
    <property type="component" value="Chromosome X"/>
</dbReference>
<dbReference type="GO" id="GO:0005789">
    <property type="term" value="C:endoplasmic reticulum membrane"/>
    <property type="evidence" value="ECO:0000250"/>
    <property type="project" value="UniProtKB"/>
</dbReference>
<dbReference type="GO" id="GO:0005886">
    <property type="term" value="C:plasma membrane"/>
    <property type="evidence" value="ECO:0007669"/>
    <property type="project" value="EnsemblMetazoa"/>
</dbReference>
<dbReference type="GO" id="GO:0004622">
    <property type="term" value="F:lysophospholipase activity"/>
    <property type="evidence" value="ECO:0000250"/>
    <property type="project" value="UniProtKB"/>
</dbReference>
<dbReference type="GO" id="GO:0034236">
    <property type="term" value="F:protein kinase A catalytic subunit binding"/>
    <property type="evidence" value="ECO:0007669"/>
    <property type="project" value="EnsemblMetazoa"/>
</dbReference>
<dbReference type="GO" id="GO:0007272">
    <property type="term" value="P:ensheathment of neurons"/>
    <property type="evidence" value="ECO:0007669"/>
    <property type="project" value="EnsemblMetazoa"/>
</dbReference>
<dbReference type="GO" id="GO:0034349">
    <property type="term" value="P:glial cell apoptotic process"/>
    <property type="evidence" value="ECO:0000250"/>
    <property type="project" value="UniProtKB"/>
</dbReference>
<dbReference type="GO" id="GO:0016042">
    <property type="term" value="P:lipid catabolic process"/>
    <property type="evidence" value="ECO:0007669"/>
    <property type="project" value="UniProtKB-KW"/>
</dbReference>
<dbReference type="GO" id="GO:0006643">
    <property type="term" value="P:membrane lipid metabolic process"/>
    <property type="evidence" value="ECO:0000250"/>
    <property type="project" value="UniProtKB"/>
</dbReference>
<dbReference type="GO" id="GO:0061024">
    <property type="term" value="P:membrane organization"/>
    <property type="evidence" value="ECO:0000250"/>
    <property type="project" value="UniProtKB"/>
</dbReference>
<dbReference type="GO" id="GO:0051402">
    <property type="term" value="P:neuron apoptotic process"/>
    <property type="evidence" value="ECO:0000250"/>
    <property type="project" value="UniProtKB"/>
</dbReference>
<dbReference type="GO" id="GO:0046470">
    <property type="term" value="P:phosphatidylcholine metabolic process"/>
    <property type="evidence" value="ECO:0000250"/>
    <property type="project" value="UniProtKB"/>
</dbReference>
<dbReference type="GO" id="GO:0045494">
    <property type="term" value="P:photoreceptor cell maintenance"/>
    <property type="evidence" value="ECO:0007669"/>
    <property type="project" value="EnsemblMetazoa"/>
</dbReference>
<dbReference type="GO" id="GO:0072657">
    <property type="term" value="P:protein localization to membrane"/>
    <property type="evidence" value="ECO:0007669"/>
    <property type="project" value="EnsemblMetazoa"/>
</dbReference>
<dbReference type="GO" id="GO:0007608">
    <property type="term" value="P:sensory perception of smell"/>
    <property type="evidence" value="ECO:0007669"/>
    <property type="project" value="EnsemblMetazoa"/>
</dbReference>
<dbReference type="CDD" id="cd00038">
    <property type="entry name" value="CAP_ED"/>
    <property type="match status" value="3"/>
</dbReference>
<dbReference type="CDD" id="cd07225">
    <property type="entry name" value="Pat_PNPLA6_PNPLA7"/>
    <property type="match status" value="1"/>
</dbReference>
<dbReference type="FunFam" id="2.60.120.10:FF:000010">
    <property type="entry name" value="neuropathy target esterase isoform X1"/>
    <property type="match status" value="1"/>
</dbReference>
<dbReference type="FunFam" id="2.60.120.10:FF:000122">
    <property type="entry name" value="Neuropathy target esterase sws"/>
    <property type="match status" value="1"/>
</dbReference>
<dbReference type="FunFam" id="2.60.120.10:FF:000135">
    <property type="entry name" value="Neuropathy target esterase sws"/>
    <property type="match status" value="1"/>
</dbReference>
<dbReference type="FunFam" id="3.40.1090.10:FF:000022">
    <property type="entry name" value="Neuropathy target esterase sws"/>
    <property type="match status" value="1"/>
</dbReference>
<dbReference type="FunFam" id="3.40.1090.10:FF:000033">
    <property type="entry name" value="Neuropathy target esterase sws"/>
    <property type="match status" value="1"/>
</dbReference>
<dbReference type="Gene3D" id="3.40.1090.10">
    <property type="entry name" value="Cytosolic phospholipase A2 catalytic domain"/>
    <property type="match status" value="2"/>
</dbReference>
<dbReference type="Gene3D" id="2.60.120.10">
    <property type="entry name" value="Jelly Rolls"/>
    <property type="match status" value="3"/>
</dbReference>
<dbReference type="InterPro" id="IPR016035">
    <property type="entry name" value="Acyl_Trfase/lysoPLipase"/>
</dbReference>
<dbReference type="InterPro" id="IPR000595">
    <property type="entry name" value="cNMP-bd_dom"/>
</dbReference>
<dbReference type="InterPro" id="IPR018490">
    <property type="entry name" value="cNMP-bd_dom_sf"/>
</dbReference>
<dbReference type="InterPro" id="IPR001423">
    <property type="entry name" value="LysoPLipase_patatin_CS"/>
</dbReference>
<dbReference type="InterPro" id="IPR050301">
    <property type="entry name" value="NTE"/>
</dbReference>
<dbReference type="InterPro" id="IPR056556">
    <property type="entry name" value="NTE1_P-loop_dom"/>
</dbReference>
<dbReference type="InterPro" id="IPR002641">
    <property type="entry name" value="PNPLA_dom"/>
</dbReference>
<dbReference type="InterPro" id="IPR014710">
    <property type="entry name" value="RmlC-like_jellyroll"/>
</dbReference>
<dbReference type="PANTHER" id="PTHR14226:SF29">
    <property type="entry name" value="NEUROPATHY TARGET ESTERASE SWS"/>
    <property type="match status" value="1"/>
</dbReference>
<dbReference type="PANTHER" id="PTHR14226">
    <property type="entry name" value="NEUROPATHY TARGET ESTERASE/SWISS CHEESE D.MELANOGASTER"/>
    <property type="match status" value="1"/>
</dbReference>
<dbReference type="Pfam" id="PF00027">
    <property type="entry name" value="cNMP_binding"/>
    <property type="match status" value="3"/>
</dbReference>
<dbReference type="Pfam" id="PF24179">
    <property type="entry name" value="NTE_Ploop"/>
    <property type="match status" value="1"/>
</dbReference>
<dbReference type="Pfam" id="PF01734">
    <property type="entry name" value="Patatin"/>
    <property type="match status" value="1"/>
</dbReference>
<dbReference type="SMART" id="SM00100">
    <property type="entry name" value="cNMP"/>
    <property type="match status" value="3"/>
</dbReference>
<dbReference type="SUPFAM" id="SSF51206">
    <property type="entry name" value="cAMP-binding domain-like"/>
    <property type="match status" value="3"/>
</dbReference>
<dbReference type="SUPFAM" id="SSF52151">
    <property type="entry name" value="FabD/lysophospholipase-like"/>
    <property type="match status" value="2"/>
</dbReference>
<dbReference type="PROSITE" id="PS50042">
    <property type="entry name" value="CNMP_BINDING_3"/>
    <property type="match status" value="3"/>
</dbReference>
<dbReference type="PROSITE" id="PS51635">
    <property type="entry name" value="PNPLA"/>
    <property type="match status" value="1"/>
</dbReference>
<dbReference type="PROSITE" id="PS01237">
    <property type="entry name" value="UPF0028"/>
    <property type="match status" value="1"/>
</dbReference>
<evidence type="ECO:0000250" key="1"/>
<evidence type="ECO:0000250" key="2">
    <source>
        <dbReference type="UniProtKB" id="Q9U969"/>
    </source>
</evidence>
<evidence type="ECO:0000255" key="3"/>
<evidence type="ECO:0000255" key="4">
    <source>
        <dbReference type="PROSITE-ProRule" id="PRU01161"/>
    </source>
</evidence>
<evidence type="ECO:0000256" key="5">
    <source>
        <dbReference type="SAM" id="MobiDB-lite"/>
    </source>
</evidence>
<evidence type="ECO:0000312" key="6">
    <source>
        <dbReference type="EMBL" id="EDX02314.1"/>
    </source>
</evidence>
<proteinExistence type="inferred from homology"/>
<keyword id="KW-0217">Developmental protein</keyword>
<keyword id="KW-0256">Endoplasmic reticulum</keyword>
<keyword id="KW-0378">Hydrolase</keyword>
<keyword id="KW-0442">Lipid degradation</keyword>
<keyword id="KW-0443">Lipid metabolism</keyword>
<keyword id="KW-0472">Membrane</keyword>
<keyword id="KW-0524">Neurogenesis</keyword>
<keyword id="KW-0597">Phosphoprotein</keyword>
<keyword id="KW-0812">Transmembrane</keyword>
<keyword id="KW-1133">Transmembrane helix</keyword>
<gene>
    <name evidence="2" type="primary">sws</name>
    <name type="ORF">GE17492</name>
</gene>
<accession>B4Q0P3</accession>
<reference evidence="6" key="1">
    <citation type="journal article" date="2007" name="Nature">
        <title>Evolution of genes and genomes on the Drosophila phylogeny.</title>
        <authorList>
            <consortium name="Drosophila 12 genomes consortium"/>
        </authorList>
    </citation>
    <scope>NUCLEOTIDE SEQUENCE [LARGE SCALE GENOMIC DNA]</scope>
    <source>
        <strain evidence="6">Tai18E2 / Tucson 14021-0261.01</strain>
    </source>
</reference>
<sequence length="1467" mass="165017">MDVLEMLRASASGSYNTIFSDAWCQYVSKQITATMYMYCAFGLMGVLFLAWFMYFKRLARLRLRDELARSISSVTNSYGDLRGLRFRKRDKMLFYGRRMLRKMKNVSGQMYSSGKGYKRRAVMRFARRILQLRRDNMPLEMRTVEPPAEYLEETIEGSDRVPPDALYMLQSIRIFGHFEKPIFLRLCKHTQLLELMAGDYLFKITDPDDSVYIVQSGMINVYISNADGSTLSLKTVRKGESVTSLLSFIDVLSGNPSYYKTVTAKAIEKSVVIRLPMQAFEEVFQDNPDVMIRVIQVIMIRLQRVLFTALRNYLGLNAELVQNHMRYKSVSTMSGPINSQTSQSSRQATANGPPMVINQLNLMQSAASGLGMGMGTGTGSGVSVTVTRPPPSPSRHSREEHTLSDPNPNPDGSVHGTSNLFTEVHGDAPNADLFHQQQQSVGNLSTRRSSITQMTPDGSHTCPQAPGVTTSIDMRLVQSSAVDSLRKELGLSEEDAHIIEPFVELRELEPNVTLITEGNADDVCVWFVMTGTLAVYQSNQDATRAKQDKNDMLIHFVHPGEIVGGLAMLTGEASAYTIRSRSNSRIAFIRRAAIYQIMRQRPRIVLDLGNGVVRRLSPLVRQCDYALDWIFLESGRAVYRQDESSDSTYIVLSGRMRSVITHPGGKKEIVGEYGKGDLVGIVEMITETSRTTTVMAVRDSELAKLPEGLFNAIKLRYPIVVTKLISFLSHRFLGSMQTRSGSGAPGAPVEANPVTHKYSTVALVPITDEVPLTPFTYELYHSLCAIGPVLRLTSDVVRKQLGPNIFEAANEYRLTSWLAQQEDRNIITLYQCDSSLSAWTQRCMRQADVILIVGLGDRSHLVGKFEREIDRLAMRTQKELVLLYPEATNAKPANTLSWLNARPWVTKHHHVLCVKRIFTRKSQYRINDLYSRVLLSEPNMHSDFSRLARWLTGNSIGLVLGGGGARGAAHIGMLKAIQEAGIPVDMVGGVSIGALMGALWCSERNITTVTQKAREWSKKMTKWFLQLLDLTYPITSMFSGREFNKTIHDTFGDVSIEDLWIPYFTLTTDITASCHRIHTNGSLWRYVRSSMSLSGYMPPLCDPKDGHLLLDGGYVNNLPGHLWRYCRASMSIAGVFPPFCDYRDGHLLLDGCYTNNVPADVMHNLGAAHIIAIDVGSQDDTDLTNYGDDLSGWWLLYKKWNPFTSPVKVPDLPDIQSRLAYVSCVRQLEEVKNSDYCEYIRPPIDKYKTLAFGSFDEIRDVGYVFGKNYFENMAKAGRLGRFNQWFNKEPPKRVNHASLNEYTFIDLAQIVCRLPETYAVNTAELFSEDEDCDGYISEPTTLNTDRRRIQVPRAGNSLSFSETEMDSDVELDLKLERKMDKSTQSTPPTSSRASVRGKEEARHMDNWHWSVKHKVETASGATEATNAMIDQEQQHQQQADQGVGAEQLADKDEDKENRSSTYNETKN</sequence>